<sequence>MSRRKVRDTKEETVTLGPAVSDGEHVFGVARIFASFNDTFIHVTDLSGRETLVRITGGMKVKADRDESSPYAAMLAAQDVATRCKELGITALHIKLRATGGNKTKTPGRGAQSALRALARSGMKIGRIEDVTPIPSDSTRRKSGRRGRRL</sequence>
<protein>
    <recommendedName>
        <fullName evidence="2">Small ribosomal subunit protein uS11</fullName>
    </recommendedName>
    <alternativeName>
        <fullName>40S ribosomal protein S14</fullName>
    </alternativeName>
</protein>
<dbReference type="EMBL" id="AF026079">
    <property type="protein sequence ID" value="AAB81972.1"/>
    <property type="molecule type" value="mRNA"/>
</dbReference>
<dbReference type="PIR" id="T07974">
    <property type="entry name" value="T07974"/>
</dbReference>
<dbReference type="SMR" id="O22584"/>
<dbReference type="GO" id="GO:1990904">
    <property type="term" value="C:ribonucleoprotein complex"/>
    <property type="evidence" value="ECO:0007669"/>
    <property type="project" value="UniProtKB-KW"/>
</dbReference>
<dbReference type="GO" id="GO:0005840">
    <property type="term" value="C:ribosome"/>
    <property type="evidence" value="ECO:0007669"/>
    <property type="project" value="UniProtKB-KW"/>
</dbReference>
<dbReference type="GO" id="GO:0003735">
    <property type="term" value="F:structural constituent of ribosome"/>
    <property type="evidence" value="ECO:0007669"/>
    <property type="project" value="InterPro"/>
</dbReference>
<dbReference type="GO" id="GO:0006412">
    <property type="term" value="P:translation"/>
    <property type="evidence" value="ECO:0007669"/>
    <property type="project" value="InterPro"/>
</dbReference>
<dbReference type="FunFam" id="3.30.420.80:FF:000002">
    <property type="entry name" value="40S ribosomal protein S14"/>
    <property type="match status" value="1"/>
</dbReference>
<dbReference type="Gene3D" id="3.30.420.80">
    <property type="entry name" value="Ribosomal protein S11"/>
    <property type="match status" value="1"/>
</dbReference>
<dbReference type="HAMAP" id="MF_01310">
    <property type="entry name" value="Ribosomal_uS11"/>
    <property type="match status" value="1"/>
</dbReference>
<dbReference type="InterPro" id="IPR001971">
    <property type="entry name" value="Ribosomal_uS11"/>
</dbReference>
<dbReference type="InterPro" id="IPR018102">
    <property type="entry name" value="Ribosomal_uS11_CS"/>
</dbReference>
<dbReference type="InterPro" id="IPR036967">
    <property type="entry name" value="Ribosomal_uS11_sf"/>
</dbReference>
<dbReference type="NCBIfam" id="NF007176">
    <property type="entry name" value="PRK09607.1"/>
    <property type="match status" value="1"/>
</dbReference>
<dbReference type="PANTHER" id="PTHR11759">
    <property type="entry name" value="40S RIBOSOMAL PROTEIN S14/30S RIBOSOMAL PROTEIN S11"/>
    <property type="match status" value="1"/>
</dbReference>
<dbReference type="Pfam" id="PF00411">
    <property type="entry name" value="Ribosomal_S11"/>
    <property type="match status" value="1"/>
</dbReference>
<dbReference type="PIRSF" id="PIRSF002131">
    <property type="entry name" value="Ribosomal_S11"/>
    <property type="match status" value="1"/>
</dbReference>
<dbReference type="SUPFAM" id="SSF53137">
    <property type="entry name" value="Translational machinery components"/>
    <property type="match status" value="1"/>
</dbReference>
<dbReference type="PROSITE" id="PS00054">
    <property type="entry name" value="RIBOSOMAL_S11"/>
    <property type="match status" value="1"/>
</dbReference>
<gene>
    <name type="primary">RPS14</name>
</gene>
<comment type="similarity">
    <text evidence="2">Belongs to the universal ribosomal protein uS11 family.</text>
</comment>
<proteinExistence type="evidence at transcript level"/>
<feature type="chain" id="PRO_0000123348" description="Small ribosomal subunit protein uS11">
    <location>
        <begin position="1"/>
        <end position="150"/>
    </location>
</feature>
<feature type="region of interest" description="Disordered" evidence="1">
    <location>
        <begin position="130"/>
        <end position="150"/>
    </location>
</feature>
<feature type="compositionally biased region" description="Basic residues" evidence="1">
    <location>
        <begin position="141"/>
        <end position="150"/>
    </location>
</feature>
<accession>O22584</accession>
<name>RS14_LUPLU</name>
<reference key="1">
    <citation type="submission" date="1997-09" db="EMBL/GenBank/DDBJ databases">
        <authorList>
            <person name="Cherepneva G.N."/>
            <person name="Kusnetsov V.V."/>
            <person name="Oelmueller R."/>
        </authorList>
    </citation>
    <scope>NUCLEOTIDE SEQUENCE [MRNA]</scope>
    <source>
        <tissue>Cotyledon</tissue>
    </source>
</reference>
<organism>
    <name type="scientific">Lupinus luteus</name>
    <name type="common">European yellow lupine</name>
    <dbReference type="NCBI Taxonomy" id="3873"/>
    <lineage>
        <taxon>Eukaryota</taxon>
        <taxon>Viridiplantae</taxon>
        <taxon>Streptophyta</taxon>
        <taxon>Embryophyta</taxon>
        <taxon>Tracheophyta</taxon>
        <taxon>Spermatophyta</taxon>
        <taxon>Magnoliopsida</taxon>
        <taxon>eudicotyledons</taxon>
        <taxon>Gunneridae</taxon>
        <taxon>Pentapetalae</taxon>
        <taxon>rosids</taxon>
        <taxon>fabids</taxon>
        <taxon>Fabales</taxon>
        <taxon>Fabaceae</taxon>
        <taxon>Papilionoideae</taxon>
        <taxon>50 kb inversion clade</taxon>
        <taxon>genistoids sensu lato</taxon>
        <taxon>core genistoids</taxon>
        <taxon>Genisteae</taxon>
        <taxon>Lupinus</taxon>
    </lineage>
</organism>
<evidence type="ECO:0000256" key="1">
    <source>
        <dbReference type="SAM" id="MobiDB-lite"/>
    </source>
</evidence>
<evidence type="ECO:0000305" key="2"/>
<keyword id="KW-0687">Ribonucleoprotein</keyword>
<keyword id="KW-0689">Ribosomal protein</keyword>